<accession>A7NLU2</accession>
<proteinExistence type="inferred from homology"/>
<feature type="chain" id="PRO_0000387909" description="4-hydroxy-2-oxovalerate aldolase">
    <location>
        <begin position="1"/>
        <end position="336"/>
    </location>
</feature>
<feature type="domain" description="Pyruvate carboxyltransferase" evidence="1">
    <location>
        <begin position="4"/>
        <end position="254"/>
    </location>
</feature>
<feature type="active site" description="Proton acceptor" evidence="1">
    <location>
        <position position="16"/>
    </location>
</feature>
<feature type="binding site" evidence="1">
    <location>
        <begin position="12"/>
        <end position="13"/>
    </location>
    <ligand>
        <name>substrate</name>
    </ligand>
</feature>
<feature type="binding site" evidence="1">
    <location>
        <position position="13"/>
    </location>
    <ligand>
        <name>Mn(2+)</name>
        <dbReference type="ChEBI" id="CHEBI:29035"/>
    </ligand>
</feature>
<feature type="binding site" evidence="1">
    <location>
        <position position="166"/>
    </location>
    <ligand>
        <name>substrate</name>
    </ligand>
</feature>
<feature type="binding site" evidence="1">
    <location>
        <position position="193"/>
    </location>
    <ligand>
        <name>Mn(2+)</name>
        <dbReference type="ChEBI" id="CHEBI:29035"/>
    </ligand>
</feature>
<feature type="binding site" evidence="1">
    <location>
        <position position="193"/>
    </location>
    <ligand>
        <name>substrate</name>
    </ligand>
</feature>
<feature type="binding site" evidence="1">
    <location>
        <position position="195"/>
    </location>
    <ligand>
        <name>Mn(2+)</name>
        <dbReference type="ChEBI" id="CHEBI:29035"/>
    </ligand>
</feature>
<feature type="binding site" evidence="1">
    <location>
        <position position="284"/>
    </location>
    <ligand>
        <name>substrate</name>
    </ligand>
</feature>
<feature type="site" description="Transition state stabilizer" evidence="1">
    <location>
        <position position="12"/>
    </location>
</feature>
<comment type="catalytic activity">
    <reaction evidence="1">
        <text>(S)-4-hydroxy-2-oxopentanoate = acetaldehyde + pyruvate</text>
        <dbReference type="Rhea" id="RHEA:22624"/>
        <dbReference type="ChEBI" id="CHEBI:15343"/>
        <dbReference type="ChEBI" id="CHEBI:15361"/>
        <dbReference type="ChEBI" id="CHEBI:73143"/>
        <dbReference type="EC" id="4.1.3.39"/>
    </reaction>
</comment>
<comment type="similarity">
    <text evidence="1">Belongs to the 4-hydroxy-2-oxovalerate aldolase family.</text>
</comment>
<reference key="1">
    <citation type="submission" date="2007-08" db="EMBL/GenBank/DDBJ databases">
        <title>Complete sequence of Roseiflexus castenholzii DSM 13941.</title>
        <authorList>
            <consortium name="US DOE Joint Genome Institute"/>
            <person name="Copeland A."/>
            <person name="Lucas S."/>
            <person name="Lapidus A."/>
            <person name="Barry K."/>
            <person name="Glavina del Rio T."/>
            <person name="Dalin E."/>
            <person name="Tice H."/>
            <person name="Pitluck S."/>
            <person name="Thompson L.S."/>
            <person name="Brettin T."/>
            <person name="Bruce D."/>
            <person name="Detter J.C."/>
            <person name="Han C."/>
            <person name="Tapia R."/>
            <person name="Schmutz J."/>
            <person name="Larimer F."/>
            <person name="Land M."/>
            <person name="Hauser L."/>
            <person name="Kyrpides N."/>
            <person name="Mikhailova N."/>
            <person name="Bryant D.A."/>
            <person name="Hanada S."/>
            <person name="Tsukatani Y."/>
            <person name="Richardson P."/>
        </authorList>
    </citation>
    <scope>NUCLEOTIDE SEQUENCE [LARGE SCALE GENOMIC DNA]</scope>
    <source>
        <strain>DSM 13941 / HLO8</strain>
    </source>
</reference>
<protein>
    <recommendedName>
        <fullName evidence="1">4-hydroxy-2-oxovalerate aldolase</fullName>
        <shortName evidence="1">HOA</shortName>
        <ecNumber evidence="1">4.1.3.39</ecNumber>
    </recommendedName>
    <alternativeName>
        <fullName evidence="1">4-hydroxy-2-keto-pentanoic acid aldolase</fullName>
    </alternativeName>
    <alternativeName>
        <fullName evidence="1">4-hydroxy-2-oxopentanoate aldolase</fullName>
    </alternativeName>
</protein>
<name>HOA_ROSCS</name>
<organism>
    <name type="scientific">Roseiflexus castenholzii (strain DSM 13941 / HLO8)</name>
    <dbReference type="NCBI Taxonomy" id="383372"/>
    <lineage>
        <taxon>Bacteria</taxon>
        <taxon>Bacillati</taxon>
        <taxon>Chloroflexota</taxon>
        <taxon>Chloroflexia</taxon>
        <taxon>Chloroflexales</taxon>
        <taxon>Roseiflexineae</taxon>
        <taxon>Roseiflexaceae</taxon>
        <taxon>Roseiflexus</taxon>
    </lineage>
</organism>
<dbReference type="EC" id="4.1.3.39" evidence="1"/>
<dbReference type="EMBL" id="CP000804">
    <property type="protein sequence ID" value="ABU58490.1"/>
    <property type="molecule type" value="Genomic_DNA"/>
</dbReference>
<dbReference type="RefSeq" id="WP_012120914.1">
    <property type="nucleotide sequence ID" value="NC_009767.1"/>
</dbReference>
<dbReference type="SMR" id="A7NLU2"/>
<dbReference type="STRING" id="383372.Rcas_2410"/>
<dbReference type="KEGG" id="rca:Rcas_2410"/>
<dbReference type="eggNOG" id="COG0119">
    <property type="taxonomic scope" value="Bacteria"/>
</dbReference>
<dbReference type="HOGENOM" id="CLU_049173_0_0_0"/>
<dbReference type="OrthoDB" id="9804858at2"/>
<dbReference type="Proteomes" id="UP000000263">
    <property type="component" value="Chromosome"/>
</dbReference>
<dbReference type="GO" id="GO:0003852">
    <property type="term" value="F:2-isopropylmalate synthase activity"/>
    <property type="evidence" value="ECO:0007669"/>
    <property type="project" value="TreeGrafter"/>
</dbReference>
<dbReference type="GO" id="GO:0008701">
    <property type="term" value="F:4-hydroxy-2-oxovalerate aldolase activity"/>
    <property type="evidence" value="ECO:0007669"/>
    <property type="project" value="UniProtKB-UniRule"/>
</dbReference>
<dbReference type="GO" id="GO:0030145">
    <property type="term" value="F:manganese ion binding"/>
    <property type="evidence" value="ECO:0007669"/>
    <property type="project" value="UniProtKB-UniRule"/>
</dbReference>
<dbReference type="GO" id="GO:0009056">
    <property type="term" value="P:catabolic process"/>
    <property type="evidence" value="ECO:0007669"/>
    <property type="project" value="UniProtKB-KW"/>
</dbReference>
<dbReference type="GO" id="GO:0009098">
    <property type="term" value="P:L-leucine biosynthetic process"/>
    <property type="evidence" value="ECO:0007669"/>
    <property type="project" value="TreeGrafter"/>
</dbReference>
<dbReference type="CDD" id="cd07943">
    <property type="entry name" value="DRE_TIM_HOA"/>
    <property type="match status" value="1"/>
</dbReference>
<dbReference type="Gene3D" id="1.10.8.60">
    <property type="match status" value="1"/>
</dbReference>
<dbReference type="Gene3D" id="3.20.20.70">
    <property type="entry name" value="Aldolase class I"/>
    <property type="match status" value="1"/>
</dbReference>
<dbReference type="HAMAP" id="MF_01656">
    <property type="entry name" value="HOA"/>
    <property type="match status" value="1"/>
</dbReference>
<dbReference type="InterPro" id="IPR050073">
    <property type="entry name" value="2-IPM_HCS-like"/>
</dbReference>
<dbReference type="InterPro" id="IPR017629">
    <property type="entry name" value="4OH_2_O-val_aldolase"/>
</dbReference>
<dbReference type="InterPro" id="IPR013785">
    <property type="entry name" value="Aldolase_TIM"/>
</dbReference>
<dbReference type="InterPro" id="IPR012425">
    <property type="entry name" value="DmpG_comm"/>
</dbReference>
<dbReference type="InterPro" id="IPR035685">
    <property type="entry name" value="DRE_TIM_HOA"/>
</dbReference>
<dbReference type="InterPro" id="IPR000891">
    <property type="entry name" value="PYR_CT"/>
</dbReference>
<dbReference type="NCBIfam" id="TIGR03217">
    <property type="entry name" value="4OH_2_O_val_ald"/>
    <property type="match status" value="1"/>
</dbReference>
<dbReference type="NCBIfam" id="NF006049">
    <property type="entry name" value="PRK08195.1"/>
    <property type="match status" value="1"/>
</dbReference>
<dbReference type="PANTHER" id="PTHR10277:SF9">
    <property type="entry name" value="2-ISOPROPYLMALATE SYNTHASE 1, CHLOROPLASTIC-RELATED"/>
    <property type="match status" value="1"/>
</dbReference>
<dbReference type="PANTHER" id="PTHR10277">
    <property type="entry name" value="HOMOCITRATE SYNTHASE-RELATED"/>
    <property type="match status" value="1"/>
</dbReference>
<dbReference type="Pfam" id="PF07836">
    <property type="entry name" value="DmpG_comm"/>
    <property type="match status" value="1"/>
</dbReference>
<dbReference type="Pfam" id="PF00682">
    <property type="entry name" value="HMGL-like"/>
    <property type="match status" value="1"/>
</dbReference>
<dbReference type="SUPFAM" id="SSF51569">
    <property type="entry name" value="Aldolase"/>
    <property type="match status" value="1"/>
</dbReference>
<dbReference type="SUPFAM" id="SSF89000">
    <property type="entry name" value="post-HMGL domain-like"/>
    <property type="match status" value="1"/>
</dbReference>
<dbReference type="PROSITE" id="PS50991">
    <property type="entry name" value="PYR_CT"/>
    <property type="match status" value="1"/>
</dbReference>
<keyword id="KW-0058">Aromatic hydrocarbons catabolism</keyword>
<keyword id="KW-0456">Lyase</keyword>
<keyword id="KW-0464">Manganese</keyword>
<keyword id="KW-0479">Metal-binding</keyword>
<keyword id="KW-1185">Reference proteome</keyword>
<sequence length="336" mass="36222">MNAPRLTDTTLRDGSHAMRHMFTRQHVRDIVTALDRAGVPVIEVTHGDGLAGSSLQYGFSFVSDLDLIAEARESAERARIAALLLPGIGTRRELKAAVERGVQVLRIATQCTEADISEEHFKMAKDMGLETVGFLMMSHMRSPEFLAEQALLMESYGADCVYVVDSAGAMLPRDAAARVRALKDTLRVQVGFHAHNNLGLGIGNTLAALEAGADQIDGCLRGLGAGAGNAATELLAAVLDRLGVNPGLDVLALMDAAEYVVAPIMPFQPFPDRDAITIGYAGVYSTFLLHAKRVGEQLGVDPRAILIELGRRQTVAGQEDWILDVALELVRKRERA</sequence>
<gene>
    <name type="ordered locus">Rcas_2410</name>
</gene>
<evidence type="ECO:0000255" key="1">
    <source>
        <dbReference type="HAMAP-Rule" id="MF_01656"/>
    </source>
</evidence>